<organism>
    <name type="scientific">Streptococcus pyogenes serotype M6 (strain ATCC BAA-946 / MGAS10394)</name>
    <dbReference type="NCBI Taxonomy" id="286636"/>
    <lineage>
        <taxon>Bacteria</taxon>
        <taxon>Bacillati</taxon>
        <taxon>Bacillota</taxon>
        <taxon>Bacilli</taxon>
        <taxon>Lactobacillales</taxon>
        <taxon>Streptococcaceae</taxon>
        <taxon>Streptococcus</taxon>
    </lineage>
</organism>
<name>Y1535_STRP6</name>
<accession>Q5XA93</accession>
<accession>P82583</accession>
<comment type="mass spectrometry" mass="14107.04" method="Electrospray" evidence="2"/>
<comment type="similarity">
    <text evidence="1">Belongs to the asp23 family.</text>
</comment>
<evidence type="ECO:0000255" key="1"/>
<evidence type="ECO:0000269" key="2">
    <source ref="2"/>
</evidence>
<evidence type="ECO:0000305" key="3"/>
<evidence type="ECO:0000312" key="4">
    <source>
        <dbReference type="EMBL" id="AAT87670.1"/>
    </source>
</evidence>
<proteinExistence type="evidence at protein level"/>
<gene>
    <name type="ordered locus">M6_Spy1535</name>
</gene>
<feature type="chain" id="PRO_0000259996" description="Uncharacterized protein Spy1535">
    <location>
        <begin position="1"/>
        <end position="129"/>
    </location>
</feature>
<keyword id="KW-0903">Direct protein sequencing</keyword>
<dbReference type="EMBL" id="CP000003">
    <property type="protein sequence ID" value="AAT87670.1"/>
    <property type="molecule type" value="Genomic_DNA"/>
</dbReference>
<dbReference type="RefSeq" id="WP_002983163.1">
    <property type="nucleotide sequence ID" value="NC_006086.1"/>
</dbReference>
<dbReference type="SMR" id="Q5XA93"/>
<dbReference type="KEGG" id="spa:M6_Spy1535"/>
<dbReference type="HOGENOM" id="CLU_113198_4_0_9"/>
<dbReference type="Proteomes" id="UP000001167">
    <property type="component" value="Chromosome"/>
</dbReference>
<dbReference type="InterPro" id="IPR005531">
    <property type="entry name" value="Asp23"/>
</dbReference>
<dbReference type="PANTHER" id="PTHR34297:SF1">
    <property type="entry name" value="ASP23_GLS24 FAMILY ENVELOPE STRESS RESPONSE PROTEIN"/>
    <property type="match status" value="1"/>
</dbReference>
<dbReference type="PANTHER" id="PTHR34297">
    <property type="entry name" value="HYPOTHETICAL CYTOSOLIC PROTEIN-RELATED"/>
    <property type="match status" value="1"/>
</dbReference>
<dbReference type="Pfam" id="PF03780">
    <property type="entry name" value="Asp23"/>
    <property type="match status" value="1"/>
</dbReference>
<protein>
    <recommendedName>
        <fullName>Uncharacterized protein Spy1535</fullName>
    </recommendedName>
</protein>
<sequence length="129" mass="14136">MTTEYIGEIVISPRVLEVITGIATTQVEGVHSLHNKKMADSFNKASLGKGVYLQTEEDGSVTADIYVYLQYGVKVPTVSMNIQKTVKSAVYDMAEVPISAVNIHVEGIVAEKTPKPDLKSLFDEDFLDD</sequence>
<reference evidence="4" key="1">
    <citation type="journal article" date="2004" name="J. Infect. Dis.">
        <title>Progress toward characterization of the group A Streptococcus metagenome: complete genome sequence of a macrolide-resistant serotype M6 strain.</title>
        <authorList>
            <person name="Banks D.J."/>
            <person name="Porcella S.F."/>
            <person name="Barbian K.D."/>
            <person name="Beres S.B."/>
            <person name="Philips L.E."/>
            <person name="Voyich J.M."/>
            <person name="DeLeo F.R."/>
            <person name="Martin J.M."/>
            <person name="Somerville G.A."/>
            <person name="Musser J.M."/>
        </authorList>
    </citation>
    <scope>NUCLEOTIDE SEQUENCE [LARGE SCALE GENOMIC DNA]</scope>
    <source>
        <strain>ATCC BAA-946 / MGAS10394</strain>
    </source>
</reference>
<reference evidence="3" key="2">
    <citation type="submission" date="2000-05" db="UniProtKB">
        <title>Two-dimensional gel electrophoresis map of Streptococcus pyogenes proteins.</title>
        <authorList>
            <person name="Hogan D.A."/>
            <person name="Du P."/>
            <person name="Stevenson T.I."/>
            <person name="Whitton M."/>
            <person name="Kilby G.W."/>
            <person name="Rogers J."/>
            <person name="VanBogelen R.A."/>
        </authorList>
    </citation>
    <scope>PROTEIN SEQUENCE OF 15-37 AND 75-84</scope>
    <scope>MASS SPECTROMETRY</scope>
    <source>
        <strain evidence="2">JRS4 / Serotype M6</strain>
    </source>
</reference>